<reference key="1">
    <citation type="submission" date="2006-05" db="EMBL/GenBank/DDBJ databases">
        <authorList>
            <consortium name="Genoscope"/>
        </authorList>
    </citation>
    <scope>NUCLEOTIDE SEQUENCE [LARGE SCALE GENOMIC DNA]</scope>
    <source>
        <strain>RCC307</strain>
    </source>
</reference>
<name>PSBJ_SYNR3</name>
<gene>
    <name evidence="1" type="primary">psbJ</name>
    <name type="ordered locus">SynRCC307_0207</name>
</gene>
<evidence type="ECO:0000255" key="1">
    <source>
        <dbReference type="HAMAP-Rule" id="MF_01305"/>
    </source>
</evidence>
<evidence type="ECO:0000256" key="2">
    <source>
        <dbReference type="SAM" id="MobiDB-lite"/>
    </source>
</evidence>
<organism>
    <name type="scientific">Synechococcus sp. (strain RCC307)</name>
    <dbReference type="NCBI Taxonomy" id="316278"/>
    <lineage>
        <taxon>Bacteria</taxon>
        <taxon>Bacillati</taxon>
        <taxon>Cyanobacteriota</taxon>
        <taxon>Cyanophyceae</taxon>
        <taxon>Synechococcales</taxon>
        <taxon>Synechococcaceae</taxon>
        <taxon>Synechococcus</taxon>
    </lineage>
</organism>
<comment type="function">
    <text evidence="1">One of the components of the core complex of photosystem II (PSII). PSII is a light-driven water:plastoquinone oxidoreductase that uses light energy to abstract electrons from H(2)O, generating O(2) and a proton gradient subsequently used for ATP formation. It consists of a core antenna complex that captures photons, and an electron transfer chain that converts photonic excitation into a charge separation.</text>
</comment>
<comment type="subunit">
    <text evidence="1">PSII is composed of 1 copy each of membrane proteins PsbA, PsbB, PsbC, PsbD, PsbE, PsbF, PsbH, PsbI, PsbJ, PsbK, PsbL, PsbM, PsbT, PsbX, PsbY, PsbZ, Psb30/Ycf12, peripheral proteins PsbO, CyanoQ (PsbQ), PsbU, PsbV and a large number of cofactors. It forms dimeric complexes.</text>
</comment>
<comment type="subcellular location">
    <subcellularLocation>
        <location evidence="1">Cellular thylakoid membrane</location>
        <topology evidence="1">Single-pass membrane protein</topology>
    </subcellularLocation>
</comment>
<comment type="similarity">
    <text evidence="1">Belongs to the PsbJ family.</text>
</comment>
<sequence>MSGKKSGLPDGRVPDRNPDGTPAVPWKSRWTEGPLPLWLVATAGGMAVMFVVGLFFYGSYVGVGSA</sequence>
<accession>A5GQF1</accession>
<feature type="chain" id="PRO_1000051817" description="Photosystem II reaction center protein J">
    <location>
        <begin position="1"/>
        <end position="66"/>
    </location>
</feature>
<feature type="transmembrane region" description="Helical" evidence="1">
    <location>
        <begin position="37"/>
        <end position="57"/>
    </location>
</feature>
<feature type="region of interest" description="Disordered" evidence="2">
    <location>
        <begin position="1"/>
        <end position="27"/>
    </location>
</feature>
<protein>
    <recommendedName>
        <fullName evidence="1">Photosystem II reaction center protein J</fullName>
        <shortName evidence="1">PSII-J</shortName>
    </recommendedName>
</protein>
<keyword id="KW-0472">Membrane</keyword>
<keyword id="KW-0602">Photosynthesis</keyword>
<keyword id="KW-0604">Photosystem II</keyword>
<keyword id="KW-0674">Reaction center</keyword>
<keyword id="KW-1185">Reference proteome</keyword>
<keyword id="KW-0793">Thylakoid</keyword>
<keyword id="KW-0812">Transmembrane</keyword>
<keyword id="KW-1133">Transmembrane helix</keyword>
<dbReference type="EMBL" id="CT978603">
    <property type="protein sequence ID" value="CAK27110.1"/>
    <property type="molecule type" value="Genomic_DNA"/>
</dbReference>
<dbReference type="SMR" id="A5GQF1"/>
<dbReference type="STRING" id="316278.SynRCC307_0207"/>
<dbReference type="KEGG" id="syr:SynRCC307_0207"/>
<dbReference type="eggNOG" id="ENOG5030SSD">
    <property type="taxonomic scope" value="Bacteria"/>
</dbReference>
<dbReference type="HOGENOM" id="CLU_2829784_0_0_3"/>
<dbReference type="OrthoDB" id="466474at2"/>
<dbReference type="Proteomes" id="UP000001115">
    <property type="component" value="Chromosome"/>
</dbReference>
<dbReference type="GO" id="GO:0009539">
    <property type="term" value="C:photosystem II reaction center"/>
    <property type="evidence" value="ECO:0007669"/>
    <property type="project" value="InterPro"/>
</dbReference>
<dbReference type="GO" id="GO:0031676">
    <property type="term" value="C:plasma membrane-derived thylakoid membrane"/>
    <property type="evidence" value="ECO:0007669"/>
    <property type="project" value="UniProtKB-SubCell"/>
</dbReference>
<dbReference type="GO" id="GO:0015979">
    <property type="term" value="P:photosynthesis"/>
    <property type="evidence" value="ECO:0007669"/>
    <property type="project" value="UniProtKB-UniRule"/>
</dbReference>
<dbReference type="Gene3D" id="6.10.250.2070">
    <property type="match status" value="1"/>
</dbReference>
<dbReference type="HAMAP" id="MF_01305">
    <property type="entry name" value="PSII_PsbJ"/>
    <property type="match status" value="1"/>
</dbReference>
<dbReference type="InterPro" id="IPR002682">
    <property type="entry name" value="PSII_PsbJ"/>
</dbReference>
<dbReference type="InterPro" id="IPR037267">
    <property type="entry name" value="PSII_PsbJ_sf"/>
</dbReference>
<dbReference type="NCBIfam" id="NF002722">
    <property type="entry name" value="PRK02565.1"/>
    <property type="match status" value="1"/>
</dbReference>
<dbReference type="Pfam" id="PF01788">
    <property type="entry name" value="PsbJ"/>
    <property type="match status" value="1"/>
</dbReference>
<dbReference type="SUPFAM" id="SSF161021">
    <property type="entry name" value="Photosystem II reaction center protein J, PsbJ"/>
    <property type="match status" value="1"/>
</dbReference>
<proteinExistence type="inferred from homology"/>